<accession>P43542</accession>
<accession>D6VTG8</accession>
<proteinExistence type="inferred from homology"/>
<keyword id="KW-0472">Membrane</keyword>
<keyword id="KW-1185">Reference proteome</keyword>
<keyword id="KW-0812">Transmembrane</keyword>
<keyword id="KW-1133">Transmembrane helix</keyword>
<feature type="chain" id="PRO_0000207515" description="Protein COS4">
    <location>
        <begin position="1"/>
        <end position="379"/>
    </location>
</feature>
<feature type="transmembrane region" description="Helical" evidence="1">
    <location>
        <begin position="43"/>
        <end position="63"/>
    </location>
</feature>
<feature type="transmembrane region" description="Helical" evidence="1">
    <location>
        <begin position="70"/>
        <end position="90"/>
    </location>
</feature>
<feature type="transmembrane region" description="Helical" evidence="1">
    <location>
        <begin position="233"/>
        <end position="253"/>
    </location>
</feature>
<feature type="transmembrane region" description="Helical" evidence="1">
    <location>
        <begin position="255"/>
        <end position="275"/>
    </location>
</feature>
<protein>
    <recommendedName>
        <fullName>Protein COS4</fullName>
    </recommendedName>
</protein>
<name>COS4_YEAST</name>
<dbReference type="EMBL" id="D50617">
    <property type="protein sequence ID" value="BAA09179.1"/>
    <property type="molecule type" value="Genomic_DNA"/>
</dbReference>
<dbReference type="EMBL" id="BK006940">
    <property type="protein sequence ID" value="DAA12378.1"/>
    <property type="molecule type" value="Genomic_DNA"/>
</dbReference>
<dbReference type="PIR" id="S56193">
    <property type="entry name" value="S56193"/>
</dbReference>
<dbReference type="RefSeq" id="NP_116593.1">
    <property type="nucleotide sequence ID" value="NM_001179905.1"/>
</dbReference>
<dbReference type="BioGRID" id="31085">
    <property type="interactions" value="30"/>
</dbReference>
<dbReference type="DIP" id="DIP-7524N"/>
<dbReference type="FunCoup" id="P43542">
    <property type="interactions" value="70"/>
</dbReference>
<dbReference type="IntAct" id="P43542">
    <property type="interactions" value="26"/>
</dbReference>
<dbReference type="MINT" id="P43542"/>
<dbReference type="STRING" id="4932.YFL062W"/>
<dbReference type="iPTMnet" id="P43542"/>
<dbReference type="PaxDb" id="4932-YFL062W"/>
<dbReference type="PeptideAtlas" id="P43542"/>
<dbReference type="EnsemblFungi" id="YFL062W_mRNA">
    <property type="protein sequence ID" value="YFL062W"/>
    <property type="gene ID" value="YFL062W"/>
</dbReference>
<dbReference type="GeneID" id="850482"/>
<dbReference type="KEGG" id="sce:YFL062W"/>
<dbReference type="AGR" id="SGD:S000001832"/>
<dbReference type="SGD" id="S000001832">
    <property type="gene designation" value="COS4"/>
</dbReference>
<dbReference type="VEuPathDB" id="FungiDB:YFL062W"/>
<dbReference type="eggNOG" id="ENOG502SAGH">
    <property type="taxonomic scope" value="Eukaryota"/>
</dbReference>
<dbReference type="GeneTree" id="ENSGT00940000176283"/>
<dbReference type="HOGENOM" id="CLU_062892_1_0_1"/>
<dbReference type="InParanoid" id="P43542"/>
<dbReference type="OMA" id="WDDITER"/>
<dbReference type="OrthoDB" id="4039705at2759"/>
<dbReference type="BioCyc" id="YEAST:G3O-30405-MONOMER"/>
<dbReference type="BioGRID-ORCS" id="850482">
    <property type="hits" value="0 hits in 10 CRISPR screens"/>
</dbReference>
<dbReference type="PRO" id="PR:P43542"/>
<dbReference type="Proteomes" id="UP000002311">
    <property type="component" value="Chromosome VI"/>
</dbReference>
<dbReference type="RNAct" id="P43542">
    <property type="molecule type" value="protein"/>
</dbReference>
<dbReference type="GO" id="GO:0005737">
    <property type="term" value="C:cytoplasm"/>
    <property type="evidence" value="ECO:0007005"/>
    <property type="project" value="SGD"/>
</dbReference>
<dbReference type="GO" id="GO:0005768">
    <property type="term" value="C:endosome"/>
    <property type="evidence" value="ECO:0000314"/>
    <property type="project" value="SGD"/>
</dbReference>
<dbReference type="GO" id="GO:0000324">
    <property type="term" value="C:fungal-type vacuole"/>
    <property type="evidence" value="ECO:0007005"/>
    <property type="project" value="SGD"/>
</dbReference>
<dbReference type="GO" id="GO:0000329">
    <property type="term" value="C:fungal-type vacuole membrane"/>
    <property type="evidence" value="ECO:0007005"/>
    <property type="project" value="SGD"/>
</dbReference>
<dbReference type="GO" id="GO:0005634">
    <property type="term" value="C:nucleus"/>
    <property type="evidence" value="ECO:0007005"/>
    <property type="project" value="SGD"/>
</dbReference>
<dbReference type="GO" id="GO:0043328">
    <property type="term" value="P:protein transport to vacuole involved in ubiquitin-dependent protein catabolic process via the multivesicular body sorting pathway"/>
    <property type="evidence" value="ECO:0000250"/>
    <property type="project" value="SGD"/>
</dbReference>
<dbReference type="InterPro" id="IPR001142">
    <property type="entry name" value="DUP/COS"/>
</dbReference>
<dbReference type="Pfam" id="PF00674">
    <property type="entry name" value="DUP"/>
    <property type="match status" value="2"/>
</dbReference>
<organism>
    <name type="scientific">Saccharomyces cerevisiae (strain ATCC 204508 / S288c)</name>
    <name type="common">Baker's yeast</name>
    <dbReference type="NCBI Taxonomy" id="559292"/>
    <lineage>
        <taxon>Eukaryota</taxon>
        <taxon>Fungi</taxon>
        <taxon>Dikarya</taxon>
        <taxon>Ascomycota</taxon>
        <taxon>Saccharomycotina</taxon>
        <taxon>Saccharomycetes</taxon>
        <taxon>Saccharomycetales</taxon>
        <taxon>Saccharomycetaceae</taxon>
        <taxon>Saccharomyces</taxon>
    </lineage>
</organism>
<evidence type="ECO:0000255" key="1"/>
<evidence type="ECO:0000305" key="2"/>
<comment type="subcellular location">
    <subcellularLocation>
        <location evidence="2">Membrane</location>
        <topology evidence="2">Multi-pass membrane protein</topology>
    </subcellularLocation>
</comment>
<comment type="similarity">
    <text evidence="2">Belongs to the DUP/COS family.</text>
</comment>
<reference key="1">
    <citation type="journal article" date="1995" name="Nat. Genet.">
        <title>Analysis of the nucleotide sequence of chromosome VI from Saccharomyces cerevisiae.</title>
        <authorList>
            <person name="Murakami Y."/>
            <person name="Naitou M."/>
            <person name="Hagiwara H."/>
            <person name="Shibata T."/>
            <person name="Ozawa M."/>
            <person name="Sasanuma S."/>
            <person name="Sasanuma M."/>
            <person name="Tsuchiya Y."/>
            <person name="Soeda E."/>
            <person name="Yokoyama K."/>
            <person name="Yamazaki M."/>
            <person name="Tashiro H."/>
            <person name="Eki T."/>
        </authorList>
    </citation>
    <scope>NUCLEOTIDE SEQUENCE [LARGE SCALE GENOMIC DNA]</scope>
    <source>
        <strain>ATCC 204508 / S288c</strain>
    </source>
</reference>
<reference key="2">
    <citation type="journal article" date="2014" name="G3 (Bethesda)">
        <title>The reference genome sequence of Saccharomyces cerevisiae: Then and now.</title>
        <authorList>
            <person name="Engel S.R."/>
            <person name="Dietrich F.S."/>
            <person name="Fisk D.G."/>
            <person name="Binkley G."/>
            <person name="Balakrishnan R."/>
            <person name="Costanzo M.C."/>
            <person name="Dwight S.S."/>
            <person name="Hitz B.C."/>
            <person name="Karra K."/>
            <person name="Nash R.S."/>
            <person name="Weng S."/>
            <person name="Wong E.D."/>
            <person name="Lloyd P."/>
            <person name="Skrzypek M.S."/>
            <person name="Miyasato S.R."/>
            <person name="Simison M."/>
            <person name="Cherry J.M."/>
        </authorList>
    </citation>
    <scope>GENOME REANNOTATION</scope>
    <source>
        <strain>ATCC 204508 / S288c</strain>
    </source>
</reference>
<sequence length="379" mass="45312">MKENELKNEKSVDVLSFKQLESQKIVLPQDLFRSSFTWFCYEIYKSLAFRIWMLLWLPLSVWWKLSNNWIYPLMVSLLVLFWGPVFVLVIFRLSRKRSLSKQLTQFCKEITKSTPSSDPHDWEVVAANLNSYLYENKAWNIRYFFFNAMGCQEAFRTTLLEPFSLKKDEAAKVKSFKDSVPYIEEALGVYFREVEKQWKLFNSEKSWSPVGLEDAKLPKEAYRFKLTWFLKRISNIFMLIPFLNFLCCIYVSRGMCLLLRTLYLGWILFMLVQGFQNIRVLIMSMEHKMQFLSTIINEQESGANGWDEIARKMNRYLFEKKVWKNEEFFFDGIDCEWFFSHFFYRVLSAKKSMRALSLNVELWPYIKEAQLSCSEESLA</sequence>
<gene>
    <name type="primary">COS4</name>
    <name type="ordered locus">YFL062W</name>
</gene>